<organism>
    <name type="scientific">Yersinia enterocolitica serotype O:8 / biotype 1B (strain NCTC 13174 / 8081)</name>
    <dbReference type="NCBI Taxonomy" id="393305"/>
    <lineage>
        <taxon>Bacteria</taxon>
        <taxon>Pseudomonadati</taxon>
        <taxon>Pseudomonadota</taxon>
        <taxon>Gammaproteobacteria</taxon>
        <taxon>Enterobacterales</taxon>
        <taxon>Yersiniaceae</taxon>
        <taxon>Yersinia</taxon>
    </lineage>
</organism>
<gene>
    <name type="primary">ugpE</name>
    <name type="ordered locus">YE0243</name>
</gene>
<proteinExistence type="inferred from homology"/>
<keyword id="KW-0997">Cell inner membrane</keyword>
<keyword id="KW-1003">Cell membrane</keyword>
<keyword id="KW-0472">Membrane</keyword>
<keyword id="KW-0812">Transmembrane</keyword>
<keyword id="KW-1133">Transmembrane helix</keyword>
<keyword id="KW-0813">Transport</keyword>
<accession>A1JID9</accession>
<sequence>MIENRRGLDIFCHVMLIIGVLLILFPLYVAFVAASLDDTQVFQVPMTLIPGPHLWQNISHIWHAGVGNNSAPFGLMLFNSFVMAFAITVGKITVSMLSAYAIVYFRFPLRNLFFWLIFLTLMLPVEVRIFPTIQVIANLNMLDSYTGLTLPLMASATATFLFRQFFMTLPDELLEAARIDGAGAMRFFWDIVLPLSKTNLAALFVITFIYGWNQYLWPILITSDASMGTAVAGIRSMISSSGAPTQWNQVMAAMILTLIPPVAVVLLMQRWFVRGLVDSEK</sequence>
<feature type="chain" id="PRO_0000292688" description="sn-glycerol-3-phosphate transport system permease protein UgpE">
    <location>
        <begin position="1"/>
        <end position="281"/>
    </location>
</feature>
<feature type="transmembrane region" description="Helical" evidence="3">
    <location>
        <begin position="14"/>
        <end position="34"/>
    </location>
</feature>
<feature type="transmembrane region" description="Helical" evidence="3">
    <location>
        <begin position="82"/>
        <end position="104"/>
    </location>
</feature>
<feature type="transmembrane region" description="Helical" evidence="3">
    <location>
        <begin position="113"/>
        <end position="133"/>
    </location>
</feature>
<feature type="transmembrane region" description="Helical" evidence="3">
    <location>
        <begin position="142"/>
        <end position="162"/>
    </location>
</feature>
<feature type="transmembrane region" description="Helical" evidence="3">
    <location>
        <begin position="188"/>
        <end position="210"/>
    </location>
</feature>
<feature type="transmembrane region" description="Helical" evidence="3">
    <location>
        <begin position="247"/>
        <end position="267"/>
    </location>
</feature>
<feature type="domain" description="ABC transmembrane type-1" evidence="3">
    <location>
        <begin position="77"/>
        <end position="268"/>
    </location>
</feature>
<evidence type="ECO:0000250" key="1">
    <source>
        <dbReference type="UniProtKB" id="P10906"/>
    </source>
</evidence>
<evidence type="ECO:0000255" key="2"/>
<evidence type="ECO:0000255" key="3">
    <source>
        <dbReference type="PROSITE-ProRule" id="PRU00441"/>
    </source>
</evidence>
<evidence type="ECO:0000305" key="4"/>
<protein>
    <recommendedName>
        <fullName evidence="1">sn-glycerol-3-phosphate transport system permease protein UgpE</fullName>
    </recommendedName>
</protein>
<comment type="function">
    <text evidence="1">Part of the ABC transporter complex UgpBAEC involved in sn-glycerol-3-phosphate (G3P) import. Probably responsible for the translocation of the substrate across the membrane.</text>
</comment>
<comment type="subunit">
    <text evidence="1">The complex is composed of two ATP-binding proteins (UgpC), two transmembrane proteins (UgpA and UgpE) and a solute-binding protein (UgpB).</text>
</comment>
<comment type="subcellular location">
    <subcellularLocation>
        <location evidence="1">Cell inner membrane</location>
        <topology evidence="2">Multi-pass membrane protein</topology>
    </subcellularLocation>
</comment>
<comment type="similarity">
    <text evidence="4">Belongs to the binding-protein-dependent transport system permease family. UgpAE subfamily.</text>
</comment>
<name>UGPE_YERE8</name>
<dbReference type="EMBL" id="AM286415">
    <property type="protein sequence ID" value="CAL10377.1"/>
    <property type="molecule type" value="Genomic_DNA"/>
</dbReference>
<dbReference type="RefSeq" id="WP_005176328.1">
    <property type="nucleotide sequence ID" value="NC_008800.1"/>
</dbReference>
<dbReference type="RefSeq" id="YP_001004629.1">
    <property type="nucleotide sequence ID" value="NC_008800.1"/>
</dbReference>
<dbReference type="SMR" id="A1JID9"/>
<dbReference type="KEGG" id="yen:YE0243"/>
<dbReference type="PATRIC" id="fig|393305.7.peg.335"/>
<dbReference type="eggNOG" id="COG0395">
    <property type="taxonomic scope" value="Bacteria"/>
</dbReference>
<dbReference type="HOGENOM" id="CLU_016047_1_1_6"/>
<dbReference type="OrthoDB" id="369039at2"/>
<dbReference type="Proteomes" id="UP000000642">
    <property type="component" value="Chromosome"/>
</dbReference>
<dbReference type="GO" id="GO:0005886">
    <property type="term" value="C:plasma membrane"/>
    <property type="evidence" value="ECO:0007669"/>
    <property type="project" value="UniProtKB-SubCell"/>
</dbReference>
<dbReference type="GO" id="GO:0055085">
    <property type="term" value="P:transmembrane transport"/>
    <property type="evidence" value="ECO:0007669"/>
    <property type="project" value="InterPro"/>
</dbReference>
<dbReference type="CDD" id="cd06261">
    <property type="entry name" value="TM_PBP2"/>
    <property type="match status" value="1"/>
</dbReference>
<dbReference type="Gene3D" id="1.10.3720.10">
    <property type="entry name" value="MetI-like"/>
    <property type="match status" value="1"/>
</dbReference>
<dbReference type="InterPro" id="IPR000515">
    <property type="entry name" value="MetI-like"/>
</dbReference>
<dbReference type="InterPro" id="IPR035906">
    <property type="entry name" value="MetI-like_sf"/>
</dbReference>
<dbReference type="NCBIfam" id="NF008210">
    <property type="entry name" value="PRK10973.1"/>
    <property type="match status" value="1"/>
</dbReference>
<dbReference type="PANTHER" id="PTHR43744">
    <property type="entry name" value="ABC TRANSPORTER PERMEASE PROTEIN MG189-RELATED-RELATED"/>
    <property type="match status" value="1"/>
</dbReference>
<dbReference type="PANTHER" id="PTHR43744:SF8">
    <property type="entry name" value="SN-GLYCEROL-3-PHOSPHATE TRANSPORT SYSTEM PERMEASE PROTEIN UGPE"/>
    <property type="match status" value="1"/>
</dbReference>
<dbReference type="Pfam" id="PF00528">
    <property type="entry name" value="BPD_transp_1"/>
    <property type="match status" value="1"/>
</dbReference>
<dbReference type="SUPFAM" id="SSF161098">
    <property type="entry name" value="MetI-like"/>
    <property type="match status" value="1"/>
</dbReference>
<dbReference type="PROSITE" id="PS50928">
    <property type="entry name" value="ABC_TM1"/>
    <property type="match status" value="1"/>
</dbReference>
<reference key="1">
    <citation type="journal article" date="2006" name="PLoS Genet.">
        <title>The complete genome sequence and comparative genome analysis of the high pathogenicity Yersinia enterocolitica strain 8081.</title>
        <authorList>
            <person name="Thomson N.R."/>
            <person name="Howard S."/>
            <person name="Wren B.W."/>
            <person name="Holden M.T.G."/>
            <person name="Crossman L."/>
            <person name="Challis G.L."/>
            <person name="Churcher C."/>
            <person name="Mungall K."/>
            <person name="Brooks K."/>
            <person name="Chillingworth T."/>
            <person name="Feltwell T."/>
            <person name="Abdellah Z."/>
            <person name="Hauser H."/>
            <person name="Jagels K."/>
            <person name="Maddison M."/>
            <person name="Moule S."/>
            <person name="Sanders M."/>
            <person name="Whitehead S."/>
            <person name="Quail M.A."/>
            <person name="Dougan G."/>
            <person name="Parkhill J."/>
            <person name="Prentice M.B."/>
        </authorList>
    </citation>
    <scope>NUCLEOTIDE SEQUENCE [LARGE SCALE GENOMIC DNA]</scope>
    <source>
        <strain>NCTC 13174 / 8081</strain>
    </source>
</reference>